<accession>Q6TS35</accession>
<sequence>MAEPRQEFDTAEDHAEGYALLQDQEGEHGLKASPLQTPADDGPEEPVSETSDAKSTPTAEDVTAPLVDERTPGEQAATQPPTDIPEGTTAEEAGIGDTPNMEDQAAGHVTQARMVSKGKEGTGSEDRKAKGADSKTGTKIATPRGTAPPGQKGTANATRIPAKTTPSPKTPPGTGEPAKSGDRSGYSSPGSPGTPGSRSRTPSLPTPPTREPKKVAVVRTPPKSPSSTKSRLQTAPVPMPDLKNVRSKIGSTENLKHQPGGGKVQIINKKLDLSNVQSKCGSKDNIKHVPGGGSVQIVYKPVDLSKVTSKCGSLGNIHHKPGGGQVEVKSEKLDFKDRVQSKIGSLDNITHVPGGGNKKIETHKLTFRENAKAKTDHGAEIVYKSPVVSGDTSPRHLSNVSSTGSINMVDSPQLATLADEVSASLAKQGL</sequence>
<keyword id="KW-0007">Acetylation</keyword>
<keyword id="KW-0025">Alternative splicing</keyword>
<keyword id="KW-1003">Cell membrane</keyword>
<keyword id="KW-0966">Cell projection</keyword>
<keyword id="KW-0963">Cytoplasm</keyword>
<keyword id="KW-0206">Cytoskeleton</keyword>
<keyword id="KW-1015">Disulfide bond</keyword>
<keyword id="KW-0909">Hibernation</keyword>
<keyword id="KW-1017">Isopeptide bond</keyword>
<keyword id="KW-0472">Membrane</keyword>
<keyword id="KW-0488">Methylation</keyword>
<keyword id="KW-0493">Microtubule</keyword>
<keyword id="KW-0597">Phosphoprotein</keyword>
<keyword id="KW-0677">Repeat</keyword>
<keyword id="KW-0832">Ubl conjugation</keyword>
<dbReference type="EMBL" id="AY388477">
    <property type="protein sequence ID" value="AAQ92319.1"/>
    <property type="molecule type" value="mRNA"/>
</dbReference>
<dbReference type="SMR" id="Q6TS35"/>
<dbReference type="GO" id="GO:0030424">
    <property type="term" value="C:axon"/>
    <property type="evidence" value="ECO:0007669"/>
    <property type="project" value="UniProtKB-SubCell"/>
</dbReference>
<dbReference type="GO" id="GO:0005737">
    <property type="term" value="C:cytoplasm"/>
    <property type="evidence" value="ECO:0000250"/>
    <property type="project" value="UniProtKB"/>
</dbReference>
<dbReference type="GO" id="GO:0005829">
    <property type="term" value="C:cytosol"/>
    <property type="evidence" value="ECO:0007669"/>
    <property type="project" value="UniProtKB-SubCell"/>
</dbReference>
<dbReference type="GO" id="GO:0030425">
    <property type="term" value="C:dendrite"/>
    <property type="evidence" value="ECO:0000250"/>
    <property type="project" value="UniProtKB"/>
</dbReference>
<dbReference type="GO" id="GO:0005874">
    <property type="term" value="C:microtubule"/>
    <property type="evidence" value="ECO:0007669"/>
    <property type="project" value="UniProtKB-KW"/>
</dbReference>
<dbReference type="GO" id="GO:0005886">
    <property type="term" value="C:plasma membrane"/>
    <property type="evidence" value="ECO:0007669"/>
    <property type="project" value="UniProtKB-SubCell"/>
</dbReference>
<dbReference type="GO" id="GO:0008017">
    <property type="term" value="F:microtubule binding"/>
    <property type="evidence" value="ECO:0007669"/>
    <property type="project" value="InterPro"/>
</dbReference>
<dbReference type="GO" id="GO:0042750">
    <property type="term" value="P:hibernation"/>
    <property type="evidence" value="ECO:0007669"/>
    <property type="project" value="UniProtKB-KW"/>
</dbReference>
<dbReference type="GO" id="GO:0000226">
    <property type="term" value="P:microtubule cytoskeleton organization"/>
    <property type="evidence" value="ECO:0007669"/>
    <property type="project" value="TreeGrafter"/>
</dbReference>
<dbReference type="GO" id="GO:0031175">
    <property type="term" value="P:neuron projection development"/>
    <property type="evidence" value="ECO:0007669"/>
    <property type="project" value="TreeGrafter"/>
</dbReference>
<dbReference type="InterPro" id="IPR027324">
    <property type="entry name" value="MAP2/MAP4/Tau"/>
</dbReference>
<dbReference type="InterPro" id="IPR001084">
    <property type="entry name" value="MAP_tubulin-bd_rpt"/>
</dbReference>
<dbReference type="InterPro" id="IPR002955">
    <property type="entry name" value="Tau"/>
</dbReference>
<dbReference type="PANTHER" id="PTHR11501">
    <property type="entry name" value="MICROTUBULE-ASSOCIATED PROTEIN"/>
    <property type="match status" value="1"/>
</dbReference>
<dbReference type="PANTHER" id="PTHR11501:SF14">
    <property type="entry name" value="MICROTUBULE-ASSOCIATED PROTEIN TAU"/>
    <property type="match status" value="1"/>
</dbReference>
<dbReference type="Pfam" id="PF00418">
    <property type="entry name" value="Tubulin-binding"/>
    <property type="match status" value="4"/>
</dbReference>
<dbReference type="PRINTS" id="PR01261">
    <property type="entry name" value="TAUPROTEIN"/>
</dbReference>
<dbReference type="PROSITE" id="PS00229">
    <property type="entry name" value="TAU_MAP_1"/>
    <property type="match status" value="4"/>
</dbReference>
<dbReference type="PROSITE" id="PS51491">
    <property type="entry name" value="TAU_MAP_2"/>
    <property type="match status" value="4"/>
</dbReference>
<gene>
    <name type="primary">MAPT</name>
</gene>
<proteinExistence type="evidence at protein level"/>
<reference key="1">
    <citation type="journal article" date="2003" name="J. Neurosci.">
        <title>Reversible paired helical filament-like phosphorylation of tau is an adaptive process associated with neuronal plasticity in hibernating animals.</title>
        <authorList>
            <person name="Arendt T."/>
            <person name="Stieler J."/>
            <person name="Strijkstra A.M."/>
            <person name="Hut R.A."/>
            <person name="Ruediger J."/>
            <person name="Van der Zee E.A."/>
            <person name="Harkany T."/>
            <person name="Holzer M."/>
            <person name="Haertig W."/>
        </authorList>
    </citation>
    <scope>NUCLEOTIDE SEQUENCE [MRNA]</scope>
    <scope>ALTERNATIVE SPLICING</scope>
    <scope>PHOSPHORYLATION</scope>
    <scope>FUNCTION DURING HIBERNATION</scope>
</reference>
<organism>
    <name type="scientific">Spermophilus citellus</name>
    <name type="common">European ground squirrel</name>
    <name type="synonym">Citellus citellus</name>
    <dbReference type="NCBI Taxonomy" id="9997"/>
    <lineage>
        <taxon>Eukaryota</taxon>
        <taxon>Metazoa</taxon>
        <taxon>Chordata</taxon>
        <taxon>Craniata</taxon>
        <taxon>Vertebrata</taxon>
        <taxon>Euteleostomi</taxon>
        <taxon>Mammalia</taxon>
        <taxon>Eutheria</taxon>
        <taxon>Euarchontoglires</taxon>
        <taxon>Glires</taxon>
        <taxon>Rodentia</taxon>
        <taxon>Sciuromorpha</taxon>
        <taxon>Sciuridae</taxon>
        <taxon>Xerinae</taxon>
        <taxon>Marmotini</taxon>
        <taxon>Spermophilus</taxon>
    </lineage>
</organism>
<feature type="initiator methionine" description="Removed" evidence="2">
    <location>
        <position position="1"/>
    </location>
</feature>
<feature type="chain" id="PRO_0000232454" description="Microtubule-associated protein tau">
    <location>
        <begin position="2"/>
        <end position="430"/>
    </location>
</feature>
<feature type="repeat" description="Tau/MAP 1" evidence="5">
    <location>
        <begin position="233"/>
        <end position="263"/>
    </location>
</feature>
<feature type="repeat" description="Tau/MAP 2" evidence="5">
    <location>
        <begin position="264"/>
        <end position="294"/>
    </location>
</feature>
<feature type="repeat" description="Tau/MAP 3" evidence="5">
    <location>
        <begin position="295"/>
        <end position="325"/>
    </location>
</feature>
<feature type="repeat" description="Tau/MAP 4" evidence="5">
    <location>
        <begin position="326"/>
        <end position="357"/>
    </location>
</feature>
<feature type="region of interest" description="Disordered" evidence="6">
    <location>
        <begin position="1"/>
        <end position="245"/>
    </location>
</feature>
<feature type="region of interest" description="Disordered" evidence="6">
    <location>
        <begin position="387"/>
        <end position="406"/>
    </location>
</feature>
<feature type="compositionally biased region" description="Basic and acidic residues" evidence="6">
    <location>
        <begin position="1"/>
        <end position="16"/>
    </location>
</feature>
<feature type="compositionally biased region" description="Polar residues" evidence="6">
    <location>
        <begin position="48"/>
        <end position="58"/>
    </location>
</feature>
<feature type="compositionally biased region" description="Basic and acidic residues" evidence="6">
    <location>
        <begin position="117"/>
        <end position="133"/>
    </location>
</feature>
<feature type="compositionally biased region" description="Low complexity" evidence="6">
    <location>
        <begin position="161"/>
        <end position="203"/>
    </location>
</feature>
<feature type="compositionally biased region" description="Polar residues" evidence="6">
    <location>
        <begin position="390"/>
        <end position="406"/>
    </location>
</feature>
<feature type="modified residue" description="N-acetylalanine" evidence="2">
    <location>
        <position position="2"/>
    </location>
</feature>
<feature type="modified residue" description="Phosphotyrosine" evidence="3">
    <location>
        <position position="18"/>
    </location>
</feature>
<feature type="modified residue" description="Phosphoserine" evidence="4">
    <location>
        <position position="33"/>
    </location>
</feature>
<feature type="modified residue" description="Phosphoserine" evidence="4">
    <location>
        <position position="48"/>
    </location>
</feature>
<feature type="modified residue" description="Phosphothreonine" evidence="3">
    <location>
        <position position="56"/>
    </location>
</feature>
<feature type="modified residue" description="Phosphothreonine" evidence="4">
    <location>
        <position position="58"/>
    </location>
</feature>
<feature type="modified residue" description="Phosphothreonine" evidence="3">
    <location>
        <position position="98"/>
    </location>
</feature>
<feature type="modified residue" description="Phosphothreonine" evidence="2">
    <location>
        <position position="142"/>
    </location>
</feature>
<feature type="modified residue" description="Omega-N-methylarginine" evidence="3">
    <location>
        <position position="144"/>
    </location>
</feature>
<feature type="modified residue" description="N6,N6-dimethyllysine; alternate" evidence="3">
    <location>
        <position position="152"/>
    </location>
</feature>
<feature type="modified residue" description="N6-acetyllysine; alternate" evidence="3">
    <location>
        <position position="152"/>
    </location>
</feature>
<feature type="modified residue" description="Phosphothreonine" evidence="3">
    <location>
        <position position="158"/>
    </location>
</feature>
<feature type="modified residue" description="Phosphothreonine" evidence="3">
    <location>
        <position position="164"/>
    </location>
</feature>
<feature type="modified residue" description="Phosphothreonine" evidence="3">
    <location>
        <position position="165"/>
    </location>
</feature>
<feature type="modified residue" description="Phosphothreonine" evidence="2">
    <location>
        <position position="170"/>
    </location>
</feature>
<feature type="modified residue" description="Phosphoserine" evidence="3">
    <location>
        <position position="180"/>
    </location>
</feature>
<feature type="modified residue" description="Phosphoserine" evidence="3">
    <location>
        <position position="184"/>
    </location>
</feature>
<feature type="modified residue" description="Phosphotyrosine" evidence="2">
    <location>
        <position position="186"/>
    </location>
</feature>
<feature type="modified residue" description="Phosphoserine" evidence="2">
    <location>
        <position position="187"/>
    </location>
</feature>
<feature type="modified residue" description="Phosphoserine" evidence="2">
    <location>
        <position position="188"/>
    </location>
</feature>
<feature type="modified residue" description="Phosphoserine" evidence="2">
    <location>
        <position position="191"/>
    </location>
</feature>
<feature type="modified residue" description="Phosphothreonine" evidence="2">
    <location>
        <position position="194"/>
    </location>
</feature>
<feature type="modified residue" description="Phosphothreonine" evidence="2">
    <location>
        <position position="201"/>
    </location>
</feature>
<feature type="modified residue" description="Phosphoserine" evidence="2">
    <location>
        <position position="203"/>
    </location>
</feature>
<feature type="modified residue" description="Phosphothreonine" evidence="2">
    <location>
        <position position="206"/>
    </location>
</feature>
<feature type="modified residue" description="N6-acetyllysine" evidence="3">
    <location>
        <position position="214"/>
    </location>
</feature>
<feature type="modified residue" description="Phosphothreonine" evidence="2">
    <location>
        <position position="220"/>
    </location>
</feature>
<feature type="modified residue" description="Phosphoserine" evidence="2">
    <location>
        <position position="224"/>
    </location>
</feature>
<feature type="modified residue" description="Phosphoserine" evidence="2">
    <location>
        <position position="226"/>
    </location>
</feature>
<feature type="modified residue" description="N6-acetyllysine; alternate" evidence="3">
    <location>
        <position position="248"/>
    </location>
</feature>
<feature type="modified residue" description="N6-methyllysine; alternate" evidence="3">
    <location>
        <position position="248"/>
    </location>
</feature>
<feature type="modified residue" description="Phosphoserine" evidence="2">
    <location>
        <position position="251"/>
    </location>
</feature>
<feature type="modified residue" description="N6-acetyllysine; alternate" evidence="3">
    <location>
        <position position="270"/>
    </location>
</feature>
<feature type="modified residue" description="Phosphoserine" evidence="2">
    <location>
        <position position="274"/>
    </location>
</feature>
<feature type="modified residue" description="Phosphoserine" evidence="2">
    <location>
        <position position="278"/>
    </location>
</feature>
<feature type="modified residue" description="N6-acetyllysine" evidence="3">
    <location>
        <position position="279"/>
    </location>
</feature>
<feature type="modified residue" description="Phosphoserine" evidence="2">
    <location>
        <position position="282"/>
    </location>
</feature>
<feature type="modified residue" description="N6-acetyllysine; alternate" evidence="3">
    <location>
        <position position="287"/>
    </location>
</feature>
<feature type="modified residue" description="Phosphoserine" evidence="2">
    <location>
        <position position="294"/>
    </location>
</feature>
<feature type="modified residue" description="N6,N6-dimethyllysine; alternate" evidence="3">
    <location>
        <position position="300"/>
    </location>
</feature>
<feature type="modified residue" description="N6-acetyllysine; alternate" evidence="3">
    <location>
        <position position="300"/>
    </location>
</feature>
<feature type="modified residue" description="N6-acetyllysine; alternate" evidence="3">
    <location>
        <position position="306"/>
    </location>
</feature>
<feature type="modified residue" description="N6-acetyllysine; alternate" evidence="3">
    <location>
        <position position="310"/>
    </location>
</feature>
<feature type="modified residue" description="Phosphoserine" evidence="2">
    <location>
        <position position="313"/>
    </location>
</feature>
<feature type="modified residue" description="N6-acetyllysine; alternate" evidence="3">
    <location>
        <position position="320"/>
    </location>
</feature>
<feature type="modified residue" description="N6-acetyllysine; alternate" evidence="3">
    <location>
        <position position="332"/>
    </location>
</feature>
<feature type="modified residue" description="N6-acetyllysine; alternate" evidence="3">
    <location>
        <position position="336"/>
    </location>
</feature>
<feature type="modified residue" description="Omega-N-methylarginine" evidence="3">
    <location>
        <position position="338"/>
    </location>
</feature>
<feature type="modified residue" description="Phosphoserine" evidence="2">
    <location>
        <position position="341"/>
    </location>
</feature>
<feature type="modified residue" description="Phosphoserine" evidence="2">
    <location>
        <position position="345"/>
    </location>
</feature>
<feature type="modified residue" description="N6-acetyllysine; alternate" evidence="3">
    <location>
        <position position="358"/>
    </location>
</feature>
<feature type="modified residue" description="N6-acetyllysine; alternate" evidence="3">
    <location>
        <position position="374"/>
    </location>
</feature>
<feature type="modified residue" description="Phosphotyrosine" evidence="3">
    <location>
        <position position="383"/>
    </location>
</feature>
<feature type="modified residue" description="Phosphoserine" evidence="2">
    <location>
        <position position="385"/>
    </location>
</feature>
<feature type="modified residue" description="Phosphoserine" evidence="2">
    <location>
        <position position="389"/>
    </location>
</feature>
<feature type="modified residue" description="Phosphothreonine" evidence="3">
    <location>
        <position position="392"/>
    </location>
</feature>
<feature type="modified residue" description="Phosphoserine" evidence="2">
    <location>
        <position position="393"/>
    </location>
</feature>
<feature type="modified residue" description="Phosphoserine" evidence="2">
    <location>
        <position position="398"/>
    </location>
</feature>
<feature type="modified residue" description="Phosphoserine" evidence="2">
    <location>
        <position position="405"/>
    </location>
</feature>
<feature type="modified residue" description="Phosphoserine" evidence="2">
    <location>
        <position position="411"/>
    </location>
</feature>
<feature type="modified residue" description="Phosphothreonine" evidence="2">
    <location>
        <position position="416"/>
    </location>
</feature>
<feature type="disulfide bond" evidence="1">
    <location>
        <begin position="280"/>
        <end position="311"/>
    </location>
</feature>
<feature type="cross-link" description="Glycyl lysine isopeptide (Lys-Gly) (interchain with G-Cter in ubiquitin)" evidence="3">
    <location>
        <position position="31"/>
    </location>
</feature>
<feature type="cross-link" description="Glycyl lysine isopeptide (Lys-Gly) (interchain with G-Cter in ubiquitin)" evidence="2">
    <location>
        <position position="243"/>
    </location>
</feature>
<feature type="cross-link" description="Glycyl lysine isopeptide (Lys-Gly) (interchain with G-Cter in ubiquitin); alternate" evidence="3">
    <location>
        <position position="248"/>
    </location>
</feature>
<feature type="cross-link" description="Glycyl lysine isopeptide (Lys-Gly) (interchain with G-Cter in ubiquitin)" evidence="3">
    <location>
        <position position="256"/>
    </location>
</feature>
<feature type="cross-link" description="Glycyl lysine isopeptide (Lys-Gly) (interchain with G-Cter in ubiquitin); alternate" evidence="3">
    <location>
        <position position="270"/>
    </location>
</feature>
<feature type="cross-link" description="Glycyl lysine isopeptide (Lys-Gly) (interchain with G-Cter in ubiquitin); alternate" evidence="3">
    <location>
        <position position="287"/>
    </location>
</feature>
<feature type="cross-link" description="Glycyl lysine isopeptide (Lys-Gly) (interchain with G-Cter in ubiquitin); alternate" evidence="2">
    <location>
        <position position="300"/>
    </location>
</feature>
<feature type="cross-link" description="Glycyl lysine isopeptide (Lys-Gly) (interchain with G-Cter in ubiquitin); alternate" evidence="3">
    <location>
        <position position="306"/>
    </location>
</feature>
<feature type="cross-link" description="Glycyl lysine isopeptide (Lys-Gly) (interchain with G-Cter in ubiquitin); alternate" evidence="3">
    <location>
        <position position="310"/>
    </location>
</feature>
<feature type="cross-link" description="Glycyl lysine isopeptide (Lys-Gly) (interchain with G-Cter in ubiquitin); alternate" evidence="3">
    <location>
        <position position="320"/>
    </location>
</feature>
<feature type="cross-link" description="Glycyl lysine isopeptide (Lys-Gly) (interchain with G-Cter in ubiquitin); alternate" evidence="3">
    <location>
        <position position="332"/>
    </location>
</feature>
<feature type="cross-link" description="Glycyl lysine isopeptide (Lys-Gly) (interchain with G-Cter in ubiquitin); alternate" evidence="3">
    <location>
        <position position="336"/>
    </location>
</feature>
<feature type="cross-link" description="Glycyl lysine isopeptide (Lys-Gly) (interchain with G-Cter in ubiquitin)" evidence="2">
    <location>
        <position position="342"/>
    </location>
</feature>
<feature type="cross-link" description="Glycyl lysine isopeptide (Lys-Gly) (interchain with G-Cter in ubiquitin); alternate" evidence="3">
    <location>
        <position position="358"/>
    </location>
</feature>
<feature type="cross-link" description="Glycyl lysine isopeptide (Lys-Gly) (interchain with G-Cter in ubiquitin)" evidence="3">
    <location>
        <position position="364"/>
    </location>
</feature>
<feature type="cross-link" description="Glycyl lysine isopeptide (Lys-Gly) (interchain with G-Cter in ubiquitin); alternate" evidence="3">
    <location>
        <position position="374"/>
    </location>
</feature>
<protein>
    <recommendedName>
        <fullName>Microtubule-associated protein tau</fullName>
    </recommendedName>
</protein>
<name>TAU_SPECI</name>
<comment type="function">
    <text evidence="7">Promotes microtubule assembly and stability, and might be involved in the establishment and maintenance of neuronal polarity. The C-terminus binds axonal microtubules while the N-terminus binds neural plasma membrane components, suggesting that tau functions as a linker protein between both. Axonal polarity is predetermined by tau localization (in the neuronal cell) in the domain of the cell body defined by the centrosome. The short isoforms allow plasticity of the cytoskeleton whereas the longer isoforms may preferentially play a role in its stabilization.</text>
</comment>
<comment type="subunit">
    <text evidence="2 3 4">Interacts with MARK1, MARK2, MARK3 and MARK4 (By similarity). Interacts with SQSTM1 when polyubiquitinated (By similarity). Interacts with PSMC2 through SQSTM1 (By similarity). Interacts with FKBP4 (By similarity). Binds to CSNK1D (By similarity). Interacts with SGK1 (By similarity). Interacts with PIN1 (By similarity). Interacts with LRRK2 (By similarity). Interacts with LRP1, leading to endocytosis; this interaction is reduced in the presence of LRPAP1/RAP (By similarity).</text>
</comment>
<comment type="subcellular location">
    <subcellularLocation>
        <location evidence="2">Cytoplasm</location>
        <location evidence="2">Cytosol</location>
    </subcellularLocation>
    <subcellularLocation>
        <location evidence="2">Cell membrane</location>
        <topology evidence="2">Peripheral membrane protein</topology>
        <orientation evidence="2">Cytoplasmic side</orientation>
    </subcellularLocation>
    <subcellularLocation>
        <location evidence="2">Cytoplasm</location>
        <location evidence="2">Cytoskeleton</location>
    </subcellularLocation>
    <subcellularLocation>
        <location evidence="2">Cell projection</location>
        <location evidence="2">Axon</location>
    </subcellularLocation>
    <subcellularLocation>
        <location evidence="2">Cell projection</location>
        <location evidence="2">Dendrite</location>
    </subcellularLocation>
    <text evidence="2">Mostly found in the axons of neurons, in the cytosol and in association with plasma membrane components.</text>
</comment>
<comment type="alternative products">
    <event type="alternative splicing"/>
    <isoform>
        <id>Q6TS35-1</id>
        <name>1</name>
        <sequence type="displayed"/>
    </isoform>
    <text>A number of isoforms are produced. 6 isoforms have been detected in the adult brain. The pattern of isoforms and their relative expression levels are unaffected during hibernation cycle.</text>
</comment>
<comment type="domain">
    <text evidence="1">The tau/MAP repeat binds to tubulin.</text>
</comment>
<comment type="PTM">
    <text evidence="1">Polyubiquitinated. Requires functional TRAF6 and may provoke SQSTM1-dependent degradation by the proteasome (By similarity).</text>
</comment>
<comment type="PTM">
    <text evidence="1 2">Phosphorylation at various serine and threonine residues in S-P or T-P motifs by proline-directed protein kinases (PDPK1, CDK1, CDK5, GSK3, MAPK) (a few sites per protein in interphase, more in mitosis), and at serine residues in K-X-G-S motifs by MAP/microtubule affinity-regulating kinase (MARK1, MARK2, MARK3 or MARK4), causing detachment from microtubules, and their disassembly (By similarity). Phosphorylation at Ser-345 by BRSK1 and BRSK2 in neurons affects ability to bind microtubules and plays a role in neuron polarization. Phosphorylated by PHK. Dephosphorylation at several serine and threonine residues by the serine/threonine phosphatase PPP5C (By similarity).</text>
</comment>
<comment type="PTM">
    <text evidence="7">Hyperphosphorylated (in particular at Thr-170, Ser-191, Thr-194, Ser-251, and Ser-345) during hibernation. Phosphorylation is fully reversible after arousal. Highly phosphorylated tau contains a number of paired helical filaments (PHFs)-like epitopes. PHF-like phosphorylation is not associated with fibril formation. Distribution of PHF-like tau is more intense in the entorhinal cortex, hippocampus and isocortical areas. PHF-like phosphorylation-dephosphorylation during hibernation cycle is synchronized with regression-re-establishment of afferentation. It may reflect a protective mechanism in an unfavorable environment.</text>
</comment>
<comment type="online information" name="Protein Spotlight">
    <link uri="https://www.proteinspotlight.org/back_issues/068"/>
    <text>Vita minima - Issue 68 of March 2006</text>
</comment>
<evidence type="ECO:0000250" key="1"/>
<evidence type="ECO:0000250" key="2">
    <source>
        <dbReference type="UniProtKB" id="P10636"/>
    </source>
</evidence>
<evidence type="ECO:0000250" key="3">
    <source>
        <dbReference type="UniProtKB" id="P10637"/>
    </source>
</evidence>
<evidence type="ECO:0000250" key="4">
    <source>
        <dbReference type="UniProtKB" id="P19332"/>
    </source>
</evidence>
<evidence type="ECO:0000255" key="5">
    <source>
        <dbReference type="PROSITE-ProRule" id="PRU00824"/>
    </source>
</evidence>
<evidence type="ECO:0000256" key="6">
    <source>
        <dbReference type="SAM" id="MobiDB-lite"/>
    </source>
</evidence>
<evidence type="ECO:0000269" key="7">
    <source>
    </source>
</evidence>